<keyword id="KW-0472">Membrane</keyword>
<keyword id="KW-1185">Reference proteome</keyword>
<keyword id="KW-0812">Transmembrane</keyword>
<keyword id="KW-1133">Transmembrane helix</keyword>
<evidence type="ECO:0000255" key="1"/>
<evidence type="ECO:0000256" key="2">
    <source>
        <dbReference type="SAM" id="MobiDB-lite"/>
    </source>
</evidence>
<evidence type="ECO:0000269" key="3">
    <source>
    </source>
</evidence>
<evidence type="ECO:0000305" key="4"/>
<protein>
    <recommendedName>
        <fullName>Phosphoinositide-interacting protein</fullName>
    </recommendedName>
</protein>
<feature type="chain" id="PRO_0000347061" description="Phosphoinositide-interacting protein">
    <location>
        <begin position="1"/>
        <end position="135"/>
    </location>
</feature>
<feature type="transmembrane region" description="Helical" evidence="1">
    <location>
        <begin position="54"/>
        <end position="74"/>
    </location>
</feature>
<feature type="transmembrane region" description="Helical" evidence="1">
    <location>
        <begin position="92"/>
        <end position="112"/>
    </location>
</feature>
<feature type="region of interest" description="Disordered" evidence="2">
    <location>
        <begin position="1"/>
        <end position="21"/>
    </location>
</feature>
<feature type="compositionally biased region" description="Basic and acidic residues" evidence="2">
    <location>
        <begin position="8"/>
        <end position="19"/>
    </location>
</feature>
<feature type="mutagenesis site" description="Abolishes phosphoinositide-binding but does not affect the interaction with TRPV1." evidence="3">
    <original>KKKQKQRQK</original>
    <variation>AAAQAQAQA</variation>
    <location>
        <begin position="113"/>
        <end position="121"/>
    </location>
</feature>
<feature type="mutagenesis site" description="Abolishes phosphoinositide-binding and ability to activate TRPV1 without affecting the interaction with TRPV1." evidence="3">
    <original>KKK</original>
    <variation>QQQ</variation>
    <location>
        <begin position="113"/>
        <end position="115"/>
    </location>
</feature>
<organism>
    <name type="scientific">Mus musculus</name>
    <name type="common">Mouse</name>
    <dbReference type="NCBI Taxonomy" id="10090"/>
    <lineage>
        <taxon>Eukaryota</taxon>
        <taxon>Metazoa</taxon>
        <taxon>Chordata</taxon>
        <taxon>Craniata</taxon>
        <taxon>Vertebrata</taxon>
        <taxon>Euteleostomi</taxon>
        <taxon>Mammalia</taxon>
        <taxon>Eutheria</taxon>
        <taxon>Euarchontoglires</taxon>
        <taxon>Glires</taxon>
        <taxon>Rodentia</taxon>
        <taxon>Myomorpha</taxon>
        <taxon>Muroidea</taxon>
        <taxon>Muridae</taxon>
        <taxon>Murinae</taxon>
        <taxon>Mus</taxon>
        <taxon>Mus</taxon>
    </lineage>
</organism>
<proteinExistence type="evidence at protein level"/>
<gene>
    <name type="primary">Pirt</name>
</gene>
<reference key="1">
    <citation type="journal article" date="2008" name="Cell">
        <title>Pirt, a phosphoinositide-binding protein, functions as a regulatory subunit of TRPV1.</title>
        <authorList>
            <person name="Kim A.Y."/>
            <person name="Tang Z."/>
            <person name="Liu Q."/>
            <person name="Patel K.N."/>
            <person name="Maag D."/>
            <person name="Geng Y."/>
            <person name="Dong X."/>
        </authorList>
    </citation>
    <scope>NUCLEOTIDE SEQUENCE [MRNA]</scope>
    <scope>FUNCTION</scope>
    <scope>TISSUE SPECIFICITY</scope>
    <scope>DEVELOPMENTAL STAGE</scope>
    <scope>PHOSPHOINOSITIDE-BINDING</scope>
    <scope>DISRUPTION PHENOTYPE</scope>
    <scope>INTERACTION WITH TRPV1</scope>
    <scope>MUTAGENESIS OF 113-LYS--LYS-115 AND 113-LYS--LYS-121</scope>
</reference>
<reference key="2">
    <citation type="journal article" date="2005" name="Science">
        <title>The transcriptional landscape of the mammalian genome.</title>
        <authorList>
            <person name="Carninci P."/>
            <person name="Kasukawa T."/>
            <person name="Katayama S."/>
            <person name="Gough J."/>
            <person name="Frith M.C."/>
            <person name="Maeda N."/>
            <person name="Oyama R."/>
            <person name="Ravasi T."/>
            <person name="Lenhard B."/>
            <person name="Wells C."/>
            <person name="Kodzius R."/>
            <person name="Shimokawa K."/>
            <person name="Bajic V.B."/>
            <person name="Brenner S.E."/>
            <person name="Batalov S."/>
            <person name="Forrest A.R."/>
            <person name="Zavolan M."/>
            <person name="Davis M.J."/>
            <person name="Wilming L.G."/>
            <person name="Aidinis V."/>
            <person name="Allen J.E."/>
            <person name="Ambesi-Impiombato A."/>
            <person name="Apweiler R."/>
            <person name="Aturaliya R.N."/>
            <person name="Bailey T.L."/>
            <person name="Bansal M."/>
            <person name="Baxter L."/>
            <person name="Beisel K.W."/>
            <person name="Bersano T."/>
            <person name="Bono H."/>
            <person name="Chalk A.M."/>
            <person name="Chiu K.P."/>
            <person name="Choudhary V."/>
            <person name="Christoffels A."/>
            <person name="Clutterbuck D.R."/>
            <person name="Crowe M.L."/>
            <person name="Dalla E."/>
            <person name="Dalrymple B.P."/>
            <person name="de Bono B."/>
            <person name="Della Gatta G."/>
            <person name="di Bernardo D."/>
            <person name="Down T."/>
            <person name="Engstrom P."/>
            <person name="Fagiolini M."/>
            <person name="Faulkner G."/>
            <person name="Fletcher C.F."/>
            <person name="Fukushima T."/>
            <person name="Furuno M."/>
            <person name="Futaki S."/>
            <person name="Gariboldi M."/>
            <person name="Georgii-Hemming P."/>
            <person name="Gingeras T.R."/>
            <person name="Gojobori T."/>
            <person name="Green R.E."/>
            <person name="Gustincich S."/>
            <person name="Harbers M."/>
            <person name="Hayashi Y."/>
            <person name="Hensch T.K."/>
            <person name="Hirokawa N."/>
            <person name="Hill D."/>
            <person name="Huminiecki L."/>
            <person name="Iacono M."/>
            <person name="Ikeo K."/>
            <person name="Iwama A."/>
            <person name="Ishikawa T."/>
            <person name="Jakt M."/>
            <person name="Kanapin A."/>
            <person name="Katoh M."/>
            <person name="Kawasawa Y."/>
            <person name="Kelso J."/>
            <person name="Kitamura H."/>
            <person name="Kitano H."/>
            <person name="Kollias G."/>
            <person name="Krishnan S.P."/>
            <person name="Kruger A."/>
            <person name="Kummerfeld S.K."/>
            <person name="Kurochkin I.V."/>
            <person name="Lareau L.F."/>
            <person name="Lazarevic D."/>
            <person name="Lipovich L."/>
            <person name="Liu J."/>
            <person name="Liuni S."/>
            <person name="McWilliam S."/>
            <person name="Madan Babu M."/>
            <person name="Madera M."/>
            <person name="Marchionni L."/>
            <person name="Matsuda H."/>
            <person name="Matsuzawa S."/>
            <person name="Miki H."/>
            <person name="Mignone F."/>
            <person name="Miyake S."/>
            <person name="Morris K."/>
            <person name="Mottagui-Tabar S."/>
            <person name="Mulder N."/>
            <person name="Nakano N."/>
            <person name="Nakauchi H."/>
            <person name="Ng P."/>
            <person name="Nilsson R."/>
            <person name="Nishiguchi S."/>
            <person name="Nishikawa S."/>
            <person name="Nori F."/>
            <person name="Ohara O."/>
            <person name="Okazaki Y."/>
            <person name="Orlando V."/>
            <person name="Pang K.C."/>
            <person name="Pavan W.J."/>
            <person name="Pavesi G."/>
            <person name="Pesole G."/>
            <person name="Petrovsky N."/>
            <person name="Piazza S."/>
            <person name="Reed J."/>
            <person name="Reid J.F."/>
            <person name="Ring B.Z."/>
            <person name="Ringwald M."/>
            <person name="Rost B."/>
            <person name="Ruan Y."/>
            <person name="Salzberg S.L."/>
            <person name="Sandelin A."/>
            <person name="Schneider C."/>
            <person name="Schoenbach C."/>
            <person name="Sekiguchi K."/>
            <person name="Semple C.A."/>
            <person name="Seno S."/>
            <person name="Sessa L."/>
            <person name="Sheng Y."/>
            <person name="Shibata Y."/>
            <person name="Shimada H."/>
            <person name="Shimada K."/>
            <person name="Silva D."/>
            <person name="Sinclair B."/>
            <person name="Sperling S."/>
            <person name="Stupka E."/>
            <person name="Sugiura K."/>
            <person name="Sultana R."/>
            <person name="Takenaka Y."/>
            <person name="Taki K."/>
            <person name="Tammoja K."/>
            <person name="Tan S.L."/>
            <person name="Tang S."/>
            <person name="Taylor M.S."/>
            <person name="Tegner J."/>
            <person name="Teichmann S.A."/>
            <person name="Ueda H.R."/>
            <person name="van Nimwegen E."/>
            <person name="Verardo R."/>
            <person name="Wei C.L."/>
            <person name="Yagi K."/>
            <person name="Yamanishi H."/>
            <person name="Zabarovsky E."/>
            <person name="Zhu S."/>
            <person name="Zimmer A."/>
            <person name="Hide W."/>
            <person name="Bult C."/>
            <person name="Grimmond S.M."/>
            <person name="Teasdale R.D."/>
            <person name="Liu E.T."/>
            <person name="Brusic V."/>
            <person name="Quackenbush J."/>
            <person name="Wahlestedt C."/>
            <person name="Mattick J.S."/>
            <person name="Hume D.A."/>
            <person name="Kai C."/>
            <person name="Sasaki D."/>
            <person name="Tomaru Y."/>
            <person name="Fukuda S."/>
            <person name="Kanamori-Katayama M."/>
            <person name="Suzuki M."/>
            <person name="Aoki J."/>
            <person name="Arakawa T."/>
            <person name="Iida J."/>
            <person name="Imamura K."/>
            <person name="Itoh M."/>
            <person name="Kato T."/>
            <person name="Kawaji H."/>
            <person name="Kawagashira N."/>
            <person name="Kawashima T."/>
            <person name="Kojima M."/>
            <person name="Kondo S."/>
            <person name="Konno H."/>
            <person name="Nakano K."/>
            <person name="Ninomiya N."/>
            <person name="Nishio T."/>
            <person name="Okada M."/>
            <person name="Plessy C."/>
            <person name="Shibata K."/>
            <person name="Shiraki T."/>
            <person name="Suzuki S."/>
            <person name="Tagami M."/>
            <person name="Waki K."/>
            <person name="Watahiki A."/>
            <person name="Okamura-Oho Y."/>
            <person name="Suzuki H."/>
            <person name="Kawai J."/>
            <person name="Hayashizaki Y."/>
        </authorList>
    </citation>
    <scope>NUCLEOTIDE SEQUENCE [LARGE SCALE MRNA]</scope>
    <source>
        <strain>C57BL/6J</strain>
        <tissue>Aorta</tissue>
        <tissue>Spinal ganglion</tissue>
        <tissue>Vein</tissue>
    </source>
</reference>
<reference key="3">
    <citation type="submission" date="2005-07" db="EMBL/GenBank/DDBJ databases">
        <authorList>
            <person name="Mural R.J."/>
            <person name="Adams M.D."/>
            <person name="Myers E.W."/>
            <person name="Smith H.O."/>
            <person name="Venter J.C."/>
        </authorList>
    </citation>
    <scope>NUCLEOTIDE SEQUENCE [LARGE SCALE GENOMIC DNA]</scope>
</reference>
<reference key="4">
    <citation type="journal article" date="2004" name="Genome Res.">
        <title>The status, quality, and expansion of the NIH full-length cDNA project: the Mammalian Gene Collection (MGC).</title>
        <authorList>
            <consortium name="The MGC Project Team"/>
        </authorList>
    </citation>
    <scope>NUCLEOTIDE SEQUENCE [LARGE SCALE MRNA]</scope>
    <source>
        <tissue>Brain</tissue>
    </source>
</reference>
<comment type="function">
    <text evidence="3">Regulatory subunit of TRPV1, a molecular sensor of noxious heat and capsaicin. Positively regulates TRPV1 channel activity via phosphatidylinositol 4,5-bisphosphate (PIP2). Binds various phosphoinositide, including phosphatidylinositol 4,5-bisphosphate (PIP2), but not phosphatidylinositol (PI).</text>
</comment>
<comment type="subunit">
    <text evidence="3">Interacts with TRPV1.</text>
</comment>
<comment type="subcellular location">
    <subcellularLocation>
        <location evidence="4">Membrane</location>
        <topology evidence="4">Multi-pass membrane protein</topology>
    </subcellularLocation>
</comment>
<comment type="tissue specificity">
    <text evidence="3">Strongly expressed in most dorsal root ganglia (DRG) and trigeminal neurons. Expressed by most peptidergic (CGRP+) and non-peptidergic (IB4+) DRG neurons. Weakly expressed in other parts of the peripheral nervous system (PNS) including sympathetic and enteric neurons. Not expressed in the spinal cord.</text>
</comment>
<comment type="developmental stage">
    <text evidence="3">First expressed in DRG neurons around embryonic day 11.5, and expression is maintained throughout adulthood.</text>
</comment>
<comment type="disruption phenotype">
    <text evidence="3">Mice show impaired responsiveness to noxious heat and capsaicin. Noxious heat- and capsaicin-sensitive currents in DRG neurons are significantly attenuated.</text>
</comment>
<accession>Q8BFY0</accession>
<dbReference type="EMBL" id="EU447173">
    <property type="protein sequence ID" value="ACC60974.1"/>
    <property type="molecule type" value="mRNA"/>
</dbReference>
<dbReference type="EMBL" id="AK041182">
    <property type="protein sequence ID" value="BAC30853.1"/>
    <property type="molecule type" value="mRNA"/>
</dbReference>
<dbReference type="EMBL" id="AK051285">
    <property type="protein sequence ID" value="BAC34593.1"/>
    <property type="molecule type" value="mRNA"/>
</dbReference>
<dbReference type="EMBL" id="AK051645">
    <property type="protein sequence ID" value="BAC34704.1"/>
    <property type="molecule type" value="mRNA"/>
</dbReference>
<dbReference type="EMBL" id="AK084056">
    <property type="protein sequence ID" value="BAC39108.1"/>
    <property type="molecule type" value="mRNA"/>
</dbReference>
<dbReference type="EMBL" id="CH466601">
    <property type="protein sequence ID" value="EDL10416.1"/>
    <property type="molecule type" value="Genomic_DNA"/>
</dbReference>
<dbReference type="EMBL" id="BC147296">
    <property type="protein sequence ID" value="AAI47297.1"/>
    <property type="molecule type" value="mRNA"/>
</dbReference>
<dbReference type="EMBL" id="BC147297">
    <property type="protein sequence ID" value="AAI47298.1"/>
    <property type="molecule type" value="mRNA"/>
</dbReference>
<dbReference type="CCDS" id="CCDS24849.1"/>
<dbReference type="RefSeq" id="NP_848771.1">
    <property type="nucleotide sequence ID" value="NM_178656.3"/>
</dbReference>
<dbReference type="RefSeq" id="XP_006532642.1">
    <property type="nucleotide sequence ID" value="XM_006532579.5"/>
</dbReference>
<dbReference type="SMR" id="Q8BFY0"/>
<dbReference type="BioGRID" id="228722">
    <property type="interactions" value="1"/>
</dbReference>
<dbReference type="FunCoup" id="Q8BFY0">
    <property type="interactions" value="888"/>
</dbReference>
<dbReference type="STRING" id="10090.ENSMUSP00000128117"/>
<dbReference type="iPTMnet" id="Q8BFY0"/>
<dbReference type="PhosphoSitePlus" id="Q8BFY0"/>
<dbReference type="SwissPalm" id="Q8BFY0"/>
<dbReference type="PaxDb" id="10090-ENSMUSP00000128117"/>
<dbReference type="ProteomicsDB" id="289501"/>
<dbReference type="Antibodypedia" id="47967">
    <property type="antibodies" value="25 antibodies from 7 providers"/>
</dbReference>
<dbReference type="Ensembl" id="ENSMUST00000123434.3">
    <property type="protein sequence ID" value="ENSMUSP00000128117.2"/>
    <property type="gene ID" value="ENSMUSG00000048070.5"/>
</dbReference>
<dbReference type="GeneID" id="193003"/>
<dbReference type="KEGG" id="mmu:193003"/>
<dbReference type="UCSC" id="uc007jln.1">
    <property type="organism name" value="mouse"/>
</dbReference>
<dbReference type="AGR" id="MGI:2443635"/>
<dbReference type="CTD" id="644139"/>
<dbReference type="MGI" id="MGI:2443635">
    <property type="gene designation" value="Pirt"/>
</dbReference>
<dbReference type="VEuPathDB" id="HostDB:ENSMUSG00000048070"/>
<dbReference type="eggNOG" id="ENOG502S54V">
    <property type="taxonomic scope" value="Eukaryota"/>
</dbReference>
<dbReference type="GeneTree" id="ENSGT00940000154322"/>
<dbReference type="HOGENOM" id="CLU_1906059_0_0_1"/>
<dbReference type="InParanoid" id="Q8BFY0"/>
<dbReference type="OMA" id="FPIHFMS"/>
<dbReference type="OrthoDB" id="9905550at2759"/>
<dbReference type="PhylomeDB" id="Q8BFY0"/>
<dbReference type="TreeFam" id="TF328608"/>
<dbReference type="BioGRID-ORCS" id="193003">
    <property type="hits" value="1 hit in 77 CRISPR screens"/>
</dbReference>
<dbReference type="PRO" id="PR:Q8BFY0"/>
<dbReference type="Proteomes" id="UP000000589">
    <property type="component" value="Chromosome 11"/>
</dbReference>
<dbReference type="RNAct" id="Q8BFY0">
    <property type="molecule type" value="protein"/>
</dbReference>
<dbReference type="Bgee" id="ENSMUSG00000048070">
    <property type="expression patterns" value="Expressed in dorsal root ganglion and 69 other cell types or tissues"/>
</dbReference>
<dbReference type="GO" id="GO:0005886">
    <property type="term" value="C:plasma membrane"/>
    <property type="evidence" value="ECO:0000314"/>
    <property type="project" value="MGI"/>
</dbReference>
<dbReference type="GO" id="GO:1902936">
    <property type="term" value="F:phosphatidylinositol bisphosphate binding"/>
    <property type="evidence" value="ECO:0000314"/>
    <property type="project" value="MGI"/>
</dbReference>
<dbReference type="GO" id="GO:0005547">
    <property type="term" value="F:phosphatidylinositol-3,4,5-trisphosphate binding"/>
    <property type="evidence" value="ECO:0000314"/>
    <property type="project" value="MGI"/>
</dbReference>
<dbReference type="GO" id="GO:0044325">
    <property type="term" value="F:transmembrane transporter binding"/>
    <property type="evidence" value="ECO:0000353"/>
    <property type="project" value="MGI"/>
</dbReference>
<dbReference type="GO" id="GO:0048266">
    <property type="term" value="P:behavioral response to pain"/>
    <property type="evidence" value="ECO:0000315"/>
    <property type="project" value="MGI"/>
</dbReference>
<dbReference type="GO" id="GO:0009408">
    <property type="term" value="P:response to heat"/>
    <property type="evidence" value="ECO:0000315"/>
    <property type="project" value="MGI"/>
</dbReference>
<dbReference type="InterPro" id="IPR028068">
    <property type="entry name" value="PIRT"/>
</dbReference>
<dbReference type="PANTHER" id="PTHR16100:SF4">
    <property type="entry name" value="PHOSPHOINOSITIDE-INTERACTING PROTEIN"/>
    <property type="match status" value="1"/>
</dbReference>
<dbReference type="PANTHER" id="PTHR16100">
    <property type="entry name" value="PHOSPHOINOSITIDE-INTERACTING PROTEIN FAMILY MEMBER"/>
    <property type="match status" value="1"/>
</dbReference>
<dbReference type="Pfam" id="PF15099">
    <property type="entry name" value="PIRT"/>
    <property type="match status" value="1"/>
</dbReference>
<sequence>MEVLPKALEVDERSPESKDLLPSQTASSLCISSRSESVWTTTPKSNWEIYHKPIIIMSVGAAILLFGVAITCVAYILEEKHKVVQVLRMIGPAFLSLGLMMLVCGLVWVPIIKKKQKQRQKSNFFQSLKFFLLNR</sequence>
<name>PIRT_MOUSE</name>